<evidence type="ECO:0000250" key="1"/>
<evidence type="ECO:0000255" key="2">
    <source>
        <dbReference type="HAMAP-Rule" id="MF_00492"/>
    </source>
</evidence>
<evidence type="ECO:0000305" key="3"/>
<dbReference type="EC" id="2.2.1.2" evidence="2"/>
<dbReference type="EMBL" id="CP000124">
    <property type="protein sequence ID" value="ABA49603.1"/>
    <property type="status" value="ALT_INIT"/>
    <property type="molecule type" value="Genomic_DNA"/>
</dbReference>
<dbReference type="RefSeq" id="WP_004522473.1">
    <property type="nucleotide sequence ID" value="NC_007434.1"/>
</dbReference>
<dbReference type="SMR" id="Q3JUL7"/>
<dbReference type="EnsemblBacteria" id="ABA49603">
    <property type="protein sequence ID" value="ABA49603"/>
    <property type="gene ID" value="BURPS1710b_1326"/>
</dbReference>
<dbReference type="GeneID" id="93059591"/>
<dbReference type="KEGG" id="bpm:BURPS1710b_1326"/>
<dbReference type="HOGENOM" id="CLU_047470_0_1_4"/>
<dbReference type="UniPathway" id="UPA00115">
    <property type="reaction ID" value="UER00414"/>
</dbReference>
<dbReference type="Proteomes" id="UP000002700">
    <property type="component" value="Chromosome I"/>
</dbReference>
<dbReference type="GO" id="GO:0005737">
    <property type="term" value="C:cytoplasm"/>
    <property type="evidence" value="ECO:0007669"/>
    <property type="project" value="UniProtKB-SubCell"/>
</dbReference>
<dbReference type="GO" id="GO:0004801">
    <property type="term" value="F:transaldolase activity"/>
    <property type="evidence" value="ECO:0000250"/>
    <property type="project" value="UniProtKB"/>
</dbReference>
<dbReference type="GO" id="GO:0005975">
    <property type="term" value="P:carbohydrate metabolic process"/>
    <property type="evidence" value="ECO:0007669"/>
    <property type="project" value="InterPro"/>
</dbReference>
<dbReference type="GO" id="GO:0009052">
    <property type="term" value="P:pentose-phosphate shunt, non-oxidative branch"/>
    <property type="evidence" value="ECO:0007669"/>
    <property type="project" value="TreeGrafter"/>
</dbReference>
<dbReference type="CDD" id="cd00957">
    <property type="entry name" value="Transaldolase_TalAB"/>
    <property type="match status" value="1"/>
</dbReference>
<dbReference type="FunFam" id="3.20.20.70:FF:000002">
    <property type="entry name" value="Transaldolase"/>
    <property type="match status" value="1"/>
</dbReference>
<dbReference type="Gene3D" id="3.20.20.70">
    <property type="entry name" value="Aldolase class I"/>
    <property type="match status" value="1"/>
</dbReference>
<dbReference type="HAMAP" id="MF_00492">
    <property type="entry name" value="Transaldolase_1"/>
    <property type="match status" value="1"/>
</dbReference>
<dbReference type="InterPro" id="IPR013785">
    <property type="entry name" value="Aldolase_TIM"/>
</dbReference>
<dbReference type="InterPro" id="IPR001585">
    <property type="entry name" value="TAL/FSA"/>
</dbReference>
<dbReference type="InterPro" id="IPR004730">
    <property type="entry name" value="Transaldolase_1"/>
</dbReference>
<dbReference type="InterPro" id="IPR018225">
    <property type="entry name" value="Transaldolase_AS"/>
</dbReference>
<dbReference type="NCBIfam" id="TIGR00874">
    <property type="entry name" value="talAB"/>
    <property type="match status" value="1"/>
</dbReference>
<dbReference type="PANTHER" id="PTHR10683">
    <property type="entry name" value="TRANSALDOLASE"/>
    <property type="match status" value="1"/>
</dbReference>
<dbReference type="PANTHER" id="PTHR10683:SF18">
    <property type="entry name" value="TRANSALDOLASE"/>
    <property type="match status" value="1"/>
</dbReference>
<dbReference type="Pfam" id="PF00923">
    <property type="entry name" value="TAL_FSA"/>
    <property type="match status" value="1"/>
</dbReference>
<dbReference type="SUPFAM" id="SSF51569">
    <property type="entry name" value="Aldolase"/>
    <property type="match status" value="1"/>
</dbReference>
<dbReference type="PROSITE" id="PS01054">
    <property type="entry name" value="TRANSALDOLASE_1"/>
    <property type="match status" value="1"/>
</dbReference>
<dbReference type="PROSITE" id="PS00958">
    <property type="entry name" value="TRANSALDOLASE_2"/>
    <property type="match status" value="1"/>
</dbReference>
<comment type="function">
    <text evidence="2">Transaldolase is important for the balance of metabolites in the pentose-phosphate pathway.</text>
</comment>
<comment type="catalytic activity">
    <reaction evidence="2">
        <text>D-sedoheptulose 7-phosphate + D-glyceraldehyde 3-phosphate = D-erythrose 4-phosphate + beta-D-fructose 6-phosphate</text>
        <dbReference type="Rhea" id="RHEA:17053"/>
        <dbReference type="ChEBI" id="CHEBI:16897"/>
        <dbReference type="ChEBI" id="CHEBI:57483"/>
        <dbReference type="ChEBI" id="CHEBI:57634"/>
        <dbReference type="ChEBI" id="CHEBI:59776"/>
        <dbReference type="EC" id="2.2.1.2"/>
    </reaction>
</comment>
<comment type="pathway">
    <text evidence="2">Carbohydrate degradation; pentose phosphate pathway; D-glyceraldehyde 3-phosphate and beta-D-fructose 6-phosphate from D-ribose 5-phosphate and D-xylulose 5-phosphate (non-oxidative stage): step 2/3.</text>
</comment>
<comment type="subunit">
    <text evidence="1">Homodimer.</text>
</comment>
<comment type="subcellular location">
    <subcellularLocation>
        <location evidence="2">Cytoplasm</location>
    </subcellularLocation>
</comment>
<comment type="similarity">
    <text evidence="2">Belongs to the transaldolase family. Type 1 subfamily.</text>
</comment>
<comment type="sequence caution" evidence="3">
    <conflict type="erroneous initiation">
        <sequence resource="EMBL-CDS" id="ABA49603"/>
    </conflict>
    <text>Extended N-terminus.</text>
</comment>
<protein>
    <recommendedName>
        <fullName evidence="2">Transaldolase</fullName>
        <ecNumber evidence="2">2.2.1.2</ecNumber>
    </recommendedName>
</protein>
<accession>Q3JUL7</accession>
<organism>
    <name type="scientific">Burkholderia pseudomallei (strain 1710b)</name>
    <dbReference type="NCBI Taxonomy" id="320372"/>
    <lineage>
        <taxon>Bacteria</taxon>
        <taxon>Pseudomonadati</taxon>
        <taxon>Pseudomonadota</taxon>
        <taxon>Betaproteobacteria</taxon>
        <taxon>Burkholderiales</taxon>
        <taxon>Burkholderiaceae</taxon>
        <taxon>Burkholderia</taxon>
        <taxon>pseudomallei group</taxon>
    </lineage>
</organism>
<gene>
    <name evidence="2" type="primary">tal</name>
    <name type="ordered locus">BURPS1710b_1326</name>
</gene>
<sequence length="317" mass="35345">MTTALDQLKQYTTVVADTGDFQQLAQYKPQDATTNPSLILKAVQKDAYRPILEKTVRDHAGESAGFIIDRLLIAFGTEILKLIPGRVSTEVDARLSFDTQRSIDKGREIIKLYEAAGVGRERVLIKLASTWEGIRAAEVLQREGIRCNMTLLFSLVQAAACAEAGAQLISPFVGRIYDWYKKQKGADWDEAQDGGANDPGVQSVRRIYTYYKHFGYRTEVMGASFRTTSQITELAGCDLLTISPELLQKLHDSTEAVARKLSPDEARDARLERVAIDESSFRFQLNDDAMATEKLAEGIRLFSADAVKLEKMIEALR</sequence>
<feature type="chain" id="PRO_0000230947" description="Transaldolase">
    <location>
        <begin position="1"/>
        <end position="317"/>
    </location>
</feature>
<feature type="active site" description="Schiff-base intermediate with substrate" evidence="2">
    <location>
        <position position="126"/>
    </location>
</feature>
<reference key="1">
    <citation type="journal article" date="2010" name="Genome Biol. Evol.">
        <title>Continuing evolution of Burkholderia mallei through genome reduction and large-scale rearrangements.</title>
        <authorList>
            <person name="Losada L."/>
            <person name="Ronning C.M."/>
            <person name="DeShazer D."/>
            <person name="Woods D."/>
            <person name="Fedorova N."/>
            <person name="Kim H.S."/>
            <person name="Shabalina S.A."/>
            <person name="Pearson T.R."/>
            <person name="Brinkac L."/>
            <person name="Tan P."/>
            <person name="Nandi T."/>
            <person name="Crabtree J."/>
            <person name="Badger J."/>
            <person name="Beckstrom-Sternberg S."/>
            <person name="Saqib M."/>
            <person name="Schutzer S.E."/>
            <person name="Keim P."/>
            <person name="Nierman W.C."/>
        </authorList>
    </citation>
    <scope>NUCLEOTIDE SEQUENCE [LARGE SCALE GENOMIC DNA]</scope>
    <source>
        <strain>1710b</strain>
    </source>
</reference>
<proteinExistence type="inferred from homology"/>
<name>TAL_BURP1</name>
<keyword id="KW-0963">Cytoplasm</keyword>
<keyword id="KW-0570">Pentose shunt</keyword>
<keyword id="KW-0704">Schiff base</keyword>
<keyword id="KW-0808">Transferase</keyword>